<evidence type="ECO:0000255" key="1">
    <source>
        <dbReference type="HAMAP-Rule" id="MF_01351"/>
    </source>
</evidence>
<keyword id="KW-0004">4Fe-4S</keyword>
<keyword id="KW-1003">Cell membrane</keyword>
<keyword id="KW-0408">Iron</keyword>
<keyword id="KW-0411">Iron-sulfur</keyword>
<keyword id="KW-0472">Membrane</keyword>
<keyword id="KW-0479">Metal-binding</keyword>
<keyword id="KW-0520">NAD</keyword>
<keyword id="KW-0874">Quinone</keyword>
<keyword id="KW-1185">Reference proteome</keyword>
<keyword id="KW-0677">Repeat</keyword>
<keyword id="KW-1278">Translocase</keyword>
<keyword id="KW-0830">Ubiquinone</keyword>
<feature type="chain" id="PRO_0000250949" description="NADH-quinone oxidoreductase subunit I">
    <location>
        <begin position="1"/>
        <end position="160"/>
    </location>
</feature>
<feature type="domain" description="4Fe-4S ferredoxin-type 1" evidence="1">
    <location>
        <begin position="52"/>
        <end position="81"/>
    </location>
</feature>
<feature type="domain" description="4Fe-4S ferredoxin-type 2" evidence="1">
    <location>
        <begin position="91"/>
        <end position="120"/>
    </location>
</feature>
<feature type="binding site" evidence="1">
    <location>
        <position position="61"/>
    </location>
    <ligand>
        <name>[4Fe-4S] cluster</name>
        <dbReference type="ChEBI" id="CHEBI:49883"/>
        <label>1</label>
    </ligand>
</feature>
<feature type="binding site" evidence="1">
    <location>
        <position position="64"/>
    </location>
    <ligand>
        <name>[4Fe-4S] cluster</name>
        <dbReference type="ChEBI" id="CHEBI:49883"/>
        <label>1</label>
    </ligand>
</feature>
<feature type="binding site" evidence="1">
    <location>
        <position position="67"/>
    </location>
    <ligand>
        <name>[4Fe-4S] cluster</name>
        <dbReference type="ChEBI" id="CHEBI:49883"/>
        <label>1</label>
    </ligand>
</feature>
<feature type="binding site" evidence="1">
    <location>
        <position position="71"/>
    </location>
    <ligand>
        <name>[4Fe-4S] cluster</name>
        <dbReference type="ChEBI" id="CHEBI:49883"/>
        <label>2</label>
    </ligand>
</feature>
<feature type="binding site" evidence="1">
    <location>
        <position position="100"/>
    </location>
    <ligand>
        <name>[4Fe-4S] cluster</name>
        <dbReference type="ChEBI" id="CHEBI:49883"/>
        <label>2</label>
    </ligand>
</feature>
<feature type="binding site" evidence="1">
    <location>
        <position position="103"/>
    </location>
    <ligand>
        <name>[4Fe-4S] cluster</name>
        <dbReference type="ChEBI" id="CHEBI:49883"/>
        <label>2</label>
    </ligand>
</feature>
<feature type="binding site" evidence="1">
    <location>
        <position position="106"/>
    </location>
    <ligand>
        <name>[4Fe-4S] cluster</name>
        <dbReference type="ChEBI" id="CHEBI:49883"/>
        <label>2</label>
    </ligand>
</feature>
<feature type="binding site" evidence="1">
    <location>
        <position position="110"/>
    </location>
    <ligand>
        <name>[4Fe-4S] cluster</name>
        <dbReference type="ChEBI" id="CHEBI:49883"/>
        <label>1</label>
    </ligand>
</feature>
<protein>
    <recommendedName>
        <fullName evidence="1">NADH-quinone oxidoreductase subunit I</fullName>
        <ecNumber evidence="1">7.1.1.-</ecNumber>
    </recommendedName>
    <alternativeName>
        <fullName evidence="1">NADH dehydrogenase I subunit I</fullName>
    </alternativeName>
    <alternativeName>
        <fullName evidence="1">NDH-1 subunit I</fullName>
    </alternativeName>
</protein>
<comment type="function">
    <text evidence="1">NDH-1 shuttles electrons from NADH, via FMN and iron-sulfur (Fe-S) centers, to quinones in the respiratory chain. The immediate electron acceptor for the enzyme in this species is believed to be ubiquinone. Couples the redox reaction to proton translocation (for every two electrons transferred, four hydrogen ions are translocated across the cytoplasmic membrane), and thus conserves the redox energy in a proton gradient.</text>
</comment>
<comment type="catalytic activity">
    <reaction evidence="1">
        <text>a quinone + NADH + 5 H(+)(in) = a quinol + NAD(+) + 4 H(+)(out)</text>
        <dbReference type="Rhea" id="RHEA:57888"/>
        <dbReference type="ChEBI" id="CHEBI:15378"/>
        <dbReference type="ChEBI" id="CHEBI:24646"/>
        <dbReference type="ChEBI" id="CHEBI:57540"/>
        <dbReference type="ChEBI" id="CHEBI:57945"/>
        <dbReference type="ChEBI" id="CHEBI:132124"/>
    </reaction>
</comment>
<comment type="cofactor">
    <cofactor evidence="1">
        <name>[4Fe-4S] cluster</name>
        <dbReference type="ChEBI" id="CHEBI:49883"/>
    </cofactor>
    <text evidence="1">Binds 2 [4Fe-4S] clusters per subunit.</text>
</comment>
<comment type="subunit">
    <text evidence="1">NDH-1 is composed of 14 different subunits. Subunits NuoA, H, J, K, L, M, N constitute the membrane sector of the complex.</text>
</comment>
<comment type="subcellular location">
    <subcellularLocation>
        <location evidence="1">Cell membrane</location>
        <topology evidence="1">Peripheral membrane protein</topology>
    </subcellularLocation>
</comment>
<comment type="similarity">
    <text evidence="1">Belongs to the complex I 23 kDa subunit family.</text>
</comment>
<reference key="1">
    <citation type="journal article" date="2005" name="PLoS Biol.">
        <title>The Wolbachia genome of Brugia malayi: endosymbiont evolution within a human pathogenic nematode.</title>
        <authorList>
            <person name="Foster J."/>
            <person name="Ganatra M."/>
            <person name="Kamal I."/>
            <person name="Ware J."/>
            <person name="Makarova K."/>
            <person name="Ivanova N."/>
            <person name="Bhattacharyya A."/>
            <person name="Kapatral V."/>
            <person name="Kumar S."/>
            <person name="Posfai J."/>
            <person name="Vincze T."/>
            <person name="Ingram J."/>
            <person name="Moran L."/>
            <person name="Lapidus A."/>
            <person name="Omelchenko M."/>
            <person name="Kyrpides N."/>
            <person name="Ghedin E."/>
            <person name="Wang S."/>
            <person name="Goltsman E."/>
            <person name="Joukov V."/>
            <person name="Ostrovskaya O."/>
            <person name="Tsukerman K."/>
            <person name="Mazur M."/>
            <person name="Comb D."/>
            <person name="Koonin E."/>
            <person name="Slatko B."/>
        </authorList>
    </citation>
    <scope>NUCLEOTIDE SEQUENCE [LARGE SCALE GENOMIC DNA]</scope>
    <source>
        <strain>TRS</strain>
    </source>
</reference>
<gene>
    <name evidence="1" type="primary">nuoI</name>
    <name type="ordered locus">Wbm0471</name>
</gene>
<dbReference type="EC" id="7.1.1.-" evidence="1"/>
<dbReference type="EMBL" id="AE017321">
    <property type="protein sequence ID" value="AAW71059.1"/>
    <property type="molecule type" value="Genomic_DNA"/>
</dbReference>
<dbReference type="RefSeq" id="WP_011256669.1">
    <property type="nucleotide sequence ID" value="NC_006833.1"/>
</dbReference>
<dbReference type="SMR" id="Q5GSG5"/>
<dbReference type="STRING" id="292805.Wbm0471"/>
<dbReference type="KEGG" id="wbm:Wbm0471"/>
<dbReference type="eggNOG" id="COG1143">
    <property type="taxonomic scope" value="Bacteria"/>
</dbReference>
<dbReference type="HOGENOM" id="CLU_067218_5_1_5"/>
<dbReference type="Proteomes" id="UP000000534">
    <property type="component" value="Chromosome"/>
</dbReference>
<dbReference type="GO" id="GO:0005886">
    <property type="term" value="C:plasma membrane"/>
    <property type="evidence" value="ECO:0007669"/>
    <property type="project" value="UniProtKB-SubCell"/>
</dbReference>
<dbReference type="GO" id="GO:0051539">
    <property type="term" value="F:4 iron, 4 sulfur cluster binding"/>
    <property type="evidence" value="ECO:0007669"/>
    <property type="project" value="UniProtKB-KW"/>
</dbReference>
<dbReference type="GO" id="GO:0005506">
    <property type="term" value="F:iron ion binding"/>
    <property type="evidence" value="ECO:0007669"/>
    <property type="project" value="UniProtKB-UniRule"/>
</dbReference>
<dbReference type="GO" id="GO:0050136">
    <property type="term" value="F:NADH:ubiquinone reductase (non-electrogenic) activity"/>
    <property type="evidence" value="ECO:0007669"/>
    <property type="project" value="UniProtKB-UniRule"/>
</dbReference>
<dbReference type="GO" id="GO:0048038">
    <property type="term" value="F:quinone binding"/>
    <property type="evidence" value="ECO:0007669"/>
    <property type="project" value="UniProtKB-KW"/>
</dbReference>
<dbReference type="GO" id="GO:0009060">
    <property type="term" value="P:aerobic respiration"/>
    <property type="evidence" value="ECO:0007669"/>
    <property type="project" value="TreeGrafter"/>
</dbReference>
<dbReference type="FunFam" id="3.30.70.3270:FF:000001">
    <property type="entry name" value="NADH-quinone oxidoreductase subunit I 1"/>
    <property type="match status" value="1"/>
</dbReference>
<dbReference type="Gene3D" id="3.30.70.3270">
    <property type="match status" value="1"/>
</dbReference>
<dbReference type="HAMAP" id="MF_01351">
    <property type="entry name" value="NDH1_NuoI"/>
    <property type="match status" value="1"/>
</dbReference>
<dbReference type="InterPro" id="IPR017896">
    <property type="entry name" value="4Fe4S_Fe-S-bd"/>
</dbReference>
<dbReference type="InterPro" id="IPR017900">
    <property type="entry name" value="4Fe4S_Fe_S_CS"/>
</dbReference>
<dbReference type="InterPro" id="IPR010226">
    <property type="entry name" value="NADH_quinone_OxRdtase_chainI"/>
</dbReference>
<dbReference type="NCBIfam" id="TIGR01971">
    <property type="entry name" value="NuoI"/>
    <property type="match status" value="1"/>
</dbReference>
<dbReference type="NCBIfam" id="NF004538">
    <property type="entry name" value="PRK05888.1-4"/>
    <property type="match status" value="1"/>
</dbReference>
<dbReference type="NCBIfam" id="NF004539">
    <property type="entry name" value="PRK05888.1-5"/>
    <property type="match status" value="1"/>
</dbReference>
<dbReference type="PANTHER" id="PTHR10849:SF20">
    <property type="entry name" value="NADH DEHYDROGENASE [UBIQUINONE] IRON-SULFUR PROTEIN 8, MITOCHONDRIAL"/>
    <property type="match status" value="1"/>
</dbReference>
<dbReference type="PANTHER" id="PTHR10849">
    <property type="entry name" value="NADH DEHYDROGENASE UBIQUINONE IRON-SULFUR PROTEIN 8, MITOCHONDRIAL"/>
    <property type="match status" value="1"/>
</dbReference>
<dbReference type="Pfam" id="PF12838">
    <property type="entry name" value="Fer4_7"/>
    <property type="match status" value="1"/>
</dbReference>
<dbReference type="SUPFAM" id="SSF54862">
    <property type="entry name" value="4Fe-4S ferredoxins"/>
    <property type="match status" value="1"/>
</dbReference>
<dbReference type="PROSITE" id="PS00198">
    <property type="entry name" value="4FE4S_FER_1"/>
    <property type="match status" value="2"/>
</dbReference>
<dbReference type="PROSITE" id="PS51379">
    <property type="entry name" value="4FE4S_FER_2"/>
    <property type="match status" value="2"/>
</dbReference>
<proteinExistence type="inferred from homology"/>
<organism>
    <name type="scientific">Wolbachia sp. subsp. Brugia malayi (strain TRS)</name>
    <dbReference type="NCBI Taxonomy" id="292805"/>
    <lineage>
        <taxon>Bacteria</taxon>
        <taxon>Pseudomonadati</taxon>
        <taxon>Pseudomonadota</taxon>
        <taxon>Alphaproteobacteria</taxon>
        <taxon>Rickettsiales</taxon>
        <taxon>Anaplasmataceae</taxon>
        <taxon>Wolbachieae</taxon>
        <taxon>Wolbachia</taxon>
    </lineage>
</organism>
<sequence>MLKKLAWYWSFVELIKGFIITLRYAFKPKVTLKYPMEKGPLSPRFRGEHALRRYSNGEERCIACKLCEVICPAQAIVIEAEEREDGSRRTTRYDIDMTKCIYCGLCQEACPVDAIVEGPNFEFATETREELMYNKEKLLRNGEIWEEAIALRLKKDVSYH</sequence>
<accession>Q5GSG5</accession>
<name>NUOI_WOLTR</name>